<proteinExistence type="inferred from homology"/>
<name>ILVB2_MAIZE</name>
<gene>
    <name type="primary">ALS2</name>
    <name type="synonym">AHAS109</name>
</gene>
<keyword id="KW-0028">Amino-acid biosynthesis</keyword>
<keyword id="KW-0100">Branched-chain amino acid biosynthesis</keyword>
<keyword id="KW-0150">Chloroplast</keyword>
<keyword id="KW-1015">Disulfide bond</keyword>
<keyword id="KW-0274">FAD</keyword>
<keyword id="KW-0285">Flavoprotein</keyword>
<keyword id="KW-0359">Herbicide resistance</keyword>
<keyword id="KW-0460">Magnesium</keyword>
<keyword id="KW-0479">Metal-binding</keyword>
<keyword id="KW-0934">Plastid</keyword>
<keyword id="KW-1185">Reference proteome</keyword>
<keyword id="KW-0786">Thiamine pyrophosphate</keyword>
<keyword id="KW-0808">Transferase</keyword>
<keyword id="KW-0809">Transit peptide</keyword>
<organism>
    <name type="scientific">Zea mays</name>
    <name type="common">Maize</name>
    <dbReference type="NCBI Taxonomy" id="4577"/>
    <lineage>
        <taxon>Eukaryota</taxon>
        <taxon>Viridiplantae</taxon>
        <taxon>Streptophyta</taxon>
        <taxon>Embryophyta</taxon>
        <taxon>Tracheophyta</taxon>
        <taxon>Spermatophyta</taxon>
        <taxon>Magnoliopsida</taxon>
        <taxon>Liliopsida</taxon>
        <taxon>Poales</taxon>
        <taxon>Poaceae</taxon>
        <taxon>PACMAD clade</taxon>
        <taxon>Panicoideae</taxon>
        <taxon>Andropogonodae</taxon>
        <taxon>Andropogoneae</taxon>
        <taxon>Tripsacinae</taxon>
        <taxon>Zea</taxon>
    </lineage>
</organism>
<sequence length="638" mass="69025">MATAATAAAALTGATTATPKSRRRAHHLATRRALAAPIRCSALSRATPTAPPATPLRPWGPNEPRKGSDILVEALERCGVRDVFAYPGGASMEIHQALTRSPVIANHLFRHEQGEAFAASAYARSSGRVGVCIATSGPGATNLVSALADALLDSVPMVAITGQVPRRMIGTDAFQETPIVEVTRSITKHNYLVLDVDDIPRVVQEAFFLASSGRPGPVLVDIPKDIQQQMAVPAWDTPMSLPGYIARLPKPPATEFLEQVLRLVGESRRPVLYVGGGCAASGEELCRFVELTGIPVTTTLMGLGNFPSDDPLSLRMLGMHGTVYANYAVDKADLLLAFGVRFDDRVTGKIEAFAGRAKIVHIDIDPAEIGKNKQPHVSICADVKLALQGMNTLLEGSTSKKSFDFGSWHDELDQQKREFPLGYKIFNEEIQPQYAIQVLDELTKGEAIIATGVGQHQMWAAQYYTYKRPRQWLSSAGLGAMGFGLPAAAGAAVANPGVTVVDIDGDGSFLMNIQELAMIRIENLPVKVFVLNNQHLGMVVQWEDRFYKANRAHTFLGNPENESEIYPDFVAIAKGFNIPAVRVTKKSEVHAAIKKMLEAPGPYLLDIIVPHQEHVLPMIPSGGAFKDMILDGDGRTVY</sequence>
<comment type="catalytic activity">
    <reaction>
        <text>2 pyruvate + H(+) = (2S)-2-acetolactate + CO2</text>
        <dbReference type="Rhea" id="RHEA:25249"/>
        <dbReference type="ChEBI" id="CHEBI:15361"/>
        <dbReference type="ChEBI" id="CHEBI:15378"/>
        <dbReference type="ChEBI" id="CHEBI:16526"/>
        <dbReference type="ChEBI" id="CHEBI:58476"/>
        <dbReference type="EC" id="2.2.1.6"/>
    </reaction>
</comment>
<comment type="cofactor">
    <cofactor evidence="1">
        <name>Mg(2+)</name>
        <dbReference type="ChEBI" id="CHEBI:18420"/>
    </cofactor>
    <text evidence="1">Binds 1 Mg(2+) ion per subunit.</text>
</comment>
<comment type="cofactor">
    <cofactor evidence="1">
        <name>thiamine diphosphate</name>
        <dbReference type="ChEBI" id="CHEBI:58937"/>
    </cofactor>
    <text evidence="1">Binds 1 thiamine pyrophosphate per subunit.</text>
</comment>
<comment type="pathway">
    <text>Amino-acid biosynthesis; L-isoleucine biosynthesis; L-isoleucine from 2-oxobutanoate: step 1/4.</text>
</comment>
<comment type="pathway">
    <text>Amino-acid biosynthesis; L-valine biosynthesis; L-valine from pyruvate: step 1/4.</text>
</comment>
<comment type="subcellular location">
    <subcellularLocation>
        <location evidence="1">Plastid</location>
        <location evidence="1">Chloroplast</location>
    </subcellularLocation>
</comment>
<comment type="miscellaneous">
    <text>Acetolactate synthase is the target enzyme for sulfonylurea and imidazolinone herbicides.</text>
</comment>
<comment type="similarity">
    <text evidence="4">Belongs to the TPP enzyme family.</text>
</comment>
<reference key="1">
    <citation type="journal article" date="1992" name="Plant Mol. Biol.">
        <title>Sequence of two acetohydroxyacid synthase genes from Zea mays.</title>
        <authorList>
            <person name="Fang L.Y."/>
            <person name="Gross P.R."/>
            <person name="Chen C.-H."/>
            <person name="Lillis M."/>
        </authorList>
    </citation>
    <scope>NUCLEOTIDE SEQUENCE [GENOMIC DNA]</scope>
</reference>
<accession>Q41769</accession>
<feature type="transit peptide" description="Chloroplast" evidence="2">
    <location>
        <begin position="1"/>
        <end position="39"/>
    </location>
</feature>
<feature type="chain" id="PRO_0000235808" description="Acetolactate synthase 2, chloroplastic">
    <location>
        <begin position="40"/>
        <end position="638"/>
    </location>
</feature>
<feature type="region of interest" description="Disordered" evidence="3">
    <location>
        <begin position="44"/>
        <end position="67"/>
    </location>
</feature>
<feature type="region of interest" description="Thiamine pyrophosphate binding" evidence="1">
    <location>
        <begin position="455"/>
        <end position="535"/>
    </location>
</feature>
<feature type="binding site" evidence="1">
    <location>
        <position position="112"/>
    </location>
    <ligand>
        <name>thiamine diphosphate</name>
        <dbReference type="ChEBI" id="CHEBI:58937"/>
    </ligand>
</feature>
<feature type="binding site" evidence="1">
    <location>
        <position position="214"/>
    </location>
    <ligand>
        <name>FAD</name>
        <dbReference type="ChEBI" id="CHEBI:57692"/>
    </ligand>
</feature>
<feature type="binding site" evidence="1">
    <location>
        <begin position="320"/>
        <end position="341"/>
    </location>
    <ligand>
        <name>FAD</name>
        <dbReference type="ChEBI" id="CHEBI:57692"/>
    </ligand>
</feature>
<feature type="binding site" evidence="1">
    <location>
        <begin position="363"/>
        <end position="382"/>
    </location>
    <ligand>
        <name>FAD</name>
        <dbReference type="ChEBI" id="CHEBI:57692"/>
    </ligand>
</feature>
<feature type="binding site" evidence="1">
    <location>
        <position position="506"/>
    </location>
    <ligand>
        <name>Mg(2+)</name>
        <dbReference type="ChEBI" id="CHEBI:18420"/>
    </ligand>
</feature>
<feature type="binding site" evidence="1">
    <location>
        <position position="533"/>
    </location>
    <ligand>
        <name>Mg(2+)</name>
        <dbReference type="ChEBI" id="CHEBI:18420"/>
    </ligand>
</feature>
<feature type="disulfide bond" evidence="1">
    <location>
        <begin position="132"/>
        <end position="278"/>
    </location>
</feature>
<dbReference type="EC" id="2.2.1.6"/>
<dbReference type="EMBL" id="X63554">
    <property type="protein sequence ID" value="CAA45117.1"/>
    <property type="molecule type" value="Genomic_DNA"/>
</dbReference>
<dbReference type="PIR" id="S22491">
    <property type="entry name" value="S22491"/>
</dbReference>
<dbReference type="SMR" id="Q41769"/>
<dbReference type="FunCoup" id="Q41769">
    <property type="interactions" value="1406"/>
</dbReference>
<dbReference type="STRING" id="4577.Q41769"/>
<dbReference type="ChEMBL" id="CHEMBL2366574"/>
<dbReference type="PaxDb" id="4577-GRMZM2G143357_P01"/>
<dbReference type="eggNOG" id="KOG4166">
    <property type="taxonomic scope" value="Eukaryota"/>
</dbReference>
<dbReference type="InParanoid" id="Q41769"/>
<dbReference type="UniPathway" id="UPA00047">
    <property type="reaction ID" value="UER00055"/>
</dbReference>
<dbReference type="UniPathway" id="UPA00049">
    <property type="reaction ID" value="UER00059"/>
</dbReference>
<dbReference type="Proteomes" id="UP000007305">
    <property type="component" value="Unplaced"/>
</dbReference>
<dbReference type="ExpressionAtlas" id="Q41769">
    <property type="expression patterns" value="baseline and differential"/>
</dbReference>
<dbReference type="GO" id="GO:0005948">
    <property type="term" value="C:acetolactate synthase complex"/>
    <property type="evidence" value="ECO:0000318"/>
    <property type="project" value="GO_Central"/>
</dbReference>
<dbReference type="GO" id="GO:0009507">
    <property type="term" value="C:chloroplast"/>
    <property type="evidence" value="ECO:0007669"/>
    <property type="project" value="UniProtKB-SubCell"/>
</dbReference>
<dbReference type="GO" id="GO:0003984">
    <property type="term" value="F:acetolactate synthase activity"/>
    <property type="evidence" value="ECO:0000318"/>
    <property type="project" value="GO_Central"/>
</dbReference>
<dbReference type="GO" id="GO:0050660">
    <property type="term" value="F:flavin adenine dinucleotide binding"/>
    <property type="evidence" value="ECO:0000318"/>
    <property type="project" value="GO_Central"/>
</dbReference>
<dbReference type="GO" id="GO:0000287">
    <property type="term" value="F:magnesium ion binding"/>
    <property type="evidence" value="ECO:0007669"/>
    <property type="project" value="InterPro"/>
</dbReference>
<dbReference type="GO" id="GO:0030976">
    <property type="term" value="F:thiamine pyrophosphate binding"/>
    <property type="evidence" value="ECO:0007669"/>
    <property type="project" value="InterPro"/>
</dbReference>
<dbReference type="GO" id="GO:0009097">
    <property type="term" value="P:isoleucine biosynthetic process"/>
    <property type="evidence" value="ECO:0000318"/>
    <property type="project" value="GO_Central"/>
</dbReference>
<dbReference type="GO" id="GO:0009099">
    <property type="term" value="P:L-valine biosynthetic process"/>
    <property type="evidence" value="ECO:0000318"/>
    <property type="project" value="GO_Central"/>
</dbReference>
<dbReference type="GO" id="GO:0009635">
    <property type="term" value="P:response to herbicide"/>
    <property type="evidence" value="ECO:0007669"/>
    <property type="project" value="UniProtKB-KW"/>
</dbReference>
<dbReference type="CDD" id="cd02015">
    <property type="entry name" value="TPP_AHAS"/>
    <property type="match status" value="1"/>
</dbReference>
<dbReference type="CDD" id="cd07035">
    <property type="entry name" value="TPP_PYR_POX_like"/>
    <property type="match status" value="1"/>
</dbReference>
<dbReference type="FunFam" id="3.40.50.1220:FF:000008">
    <property type="entry name" value="Acetolactate synthase"/>
    <property type="match status" value="1"/>
</dbReference>
<dbReference type="FunFam" id="3.40.50.970:FF:000007">
    <property type="entry name" value="Acetolactate synthase"/>
    <property type="match status" value="1"/>
</dbReference>
<dbReference type="FunFam" id="3.40.50.970:FF:000016">
    <property type="entry name" value="Acetolactate synthase"/>
    <property type="match status" value="1"/>
</dbReference>
<dbReference type="Gene3D" id="3.40.50.970">
    <property type="match status" value="2"/>
</dbReference>
<dbReference type="Gene3D" id="3.40.50.1220">
    <property type="entry name" value="TPP-binding domain"/>
    <property type="match status" value="1"/>
</dbReference>
<dbReference type="InterPro" id="IPR012846">
    <property type="entry name" value="Acetolactate_synth_lsu"/>
</dbReference>
<dbReference type="InterPro" id="IPR039368">
    <property type="entry name" value="AHAS_TPP"/>
</dbReference>
<dbReference type="InterPro" id="IPR029035">
    <property type="entry name" value="DHS-like_NAD/FAD-binding_dom"/>
</dbReference>
<dbReference type="InterPro" id="IPR029061">
    <property type="entry name" value="THDP-binding"/>
</dbReference>
<dbReference type="InterPro" id="IPR012000">
    <property type="entry name" value="Thiamin_PyroP_enz_cen_dom"/>
</dbReference>
<dbReference type="InterPro" id="IPR012001">
    <property type="entry name" value="Thiamin_PyroP_enz_TPP-bd_dom"/>
</dbReference>
<dbReference type="InterPro" id="IPR045229">
    <property type="entry name" value="TPP_enz"/>
</dbReference>
<dbReference type="InterPro" id="IPR011766">
    <property type="entry name" value="TPP_enzyme_TPP-bd"/>
</dbReference>
<dbReference type="NCBIfam" id="TIGR00118">
    <property type="entry name" value="acolac_lg"/>
    <property type="match status" value="1"/>
</dbReference>
<dbReference type="PANTHER" id="PTHR18968:SF13">
    <property type="entry name" value="ACETOLACTATE SYNTHASE CATALYTIC SUBUNIT, MITOCHONDRIAL"/>
    <property type="match status" value="1"/>
</dbReference>
<dbReference type="PANTHER" id="PTHR18968">
    <property type="entry name" value="THIAMINE PYROPHOSPHATE ENZYMES"/>
    <property type="match status" value="1"/>
</dbReference>
<dbReference type="Pfam" id="PF02775">
    <property type="entry name" value="TPP_enzyme_C"/>
    <property type="match status" value="1"/>
</dbReference>
<dbReference type="Pfam" id="PF00205">
    <property type="entry name" value="TPP_enzyme_M"/>
    <property type="match status" value="1"/>
</dbReference>
<dbReference type="Pfam" id="PF02776">
    <property type="entry name" value="TPP_enzyme_N"/>
    <property type="match status" value="1"/>
</dbReference>
<dbReference type="SUPFAM" id="SSF52467">
    <property type="entry name" value="DHS-like NAD/FAD-binding domain"/>
    <property type="match status" value="1"/>
</dbReference>
<dbReference type="SUPFAM" id="SSF52518">
    <property type="entry name" value="Thiamin diphosphate-binding fold (THDP-binding)"/>
    <property type="match status" value="2"/>
</dbReference>
<evidence type="ECO:0000250" key="1"/>
<evidence type="ECO:0000255" key="2"/>
<evidence type="ECO:0000256" key="3">
    <source>
        <dbReference type="SAM" id="MobiDB-lite"/>
    </source>
</evidence>
<evidence type="ECO:0000305" key="4"/>
<protein>
    <recommendedName>
        <fullName>Acetolactate synthase 2, chloroplastic</fullName>
        <ecNumber>2.2.1.6</ecNumber>
    </recommendedName>
    <alternativeName>
        <fullName>Acetohydroxy-acid synthase 2</fullName>
    </alternativeName>
</protein>